<proteinExistence type="inferred from homology"/>
<gene>
    <name evidence="1" type="primary">hisC</name>
    <name type="ordered locus">Suden_0471</name>
</gene>
<evidence type="ECO:0000255" key="1">
    <source>
        <dbReference type="HAMAP-Rule" id="MF_01023"/>
    </source>
</evidence>
<keyword id="KW-0028">Amino-acid biosynthesis</keyword>
<keyword id="KW-0032">Aminotransferase</keyword>
<keyword id="KW-0368">Histidine biosynthesis</keyword>
<keyword id="KW-0663">Pyridoxal phosphate</keyword>
<keyword id="KW-1185">Reference proteome</keyword>
<keyword id="KW-0808">Transferase</keyword>
<name>HIS8_SULDN</name>
<sequence>MKFNKHLQNIKTYEAGKPIELVVREYGIEPQDIVKLASNENPLGCSPKVIDAVGKILTKMSLYPDDSMISLKNALSKRYNVDSENVIIGSGSDQVIEFLIHAKAHSGSKILMNSITFAMYEIYSKHVGADVIRTSSQEHDLDEFYELYKQEKPEIIFICTPNNPTGDALDAQKIYNFLEKIDNDTLVVVDAAYMEYAIVKDAKKEINVKELIQKHSNVIYLGTFSKAYGLGGMRVGYGISEAKIIKELYKLRPPFNITTLSLEAATVALSDEEFVQKSTALNLEQMKRYEEFAKEQKIDIINSYTNFVTLSLGSNQNSTKIASQLLQNGMIVRDLSSYNMNAIRVTIGTQEQNSRFFKLVIKFL</sequence>
<comment type="catalytic activity">
    <reaction evidence="1">
        <text>L-histidinol phosphate + 2-oxoglutarate = 3-(imidazol-4-yl)-2-oxopropyl phosphate + L-glutamate</text>
        <dbReference type="Rhea" id="RHEA:23744"/>
        <dbReference type="ChEBI" id="CHEBI:16810"/>
        <dbReference type="ChEBI" id="CHEBI:29985"/>
        <dbReference type="ChEBI" id="CHEBI:57766"/>
        <dbReference type="ChEBI" id="CHEBI:57980"/>
        <dbReference type="EC" id="2.6.1.9"/>
    </reaction>
</comment>
<comment type="cofactor">
    <cofactor evidence="1">
        <name>pyridoxal 5'-phosphate</name>
        <dbReference type="ChEBI" id="CHEBI:597326"/>
    </cofactor>
</comment>
<comment type="pathway">
    <text evidence="1">Amino-acid biosynthesis; L-histidine biosynthesis; L-histidine from 5-phospho-alpha-D-ribose 1-diphosphate: step 7/9.</text>
</comment>
<comment type="subunit">
    <text evidence="1">Homodimer.</text>
</comment>
<comment type="similarity">
    <text evidence="1">Belongs to the class-II pyridoxal-phosphate-dependent aminotransferase family. Histidinol-phosphate aminotransferase subfamily.</text>
</comment>
<accession>Q30TC9</accession>
<protein>
    <recommendedName>
        <fullName evidence="1">Histidinol-phosphate aminotransferase</fullName>
        <ecNumber evidence="1">2.6.1.9</ecNumber>
    </recommendedName>
    <alternativeName>
        <fullName evidence="1">Imidazole acetol-phosphate transaminase</fullName>
    </alternativeName>
</protein>
<organism>
    <name type="scientific">Sulfurimonas denitrificans (strain ATCC 33889 / DSM 1251)</name>
    <name type="common">Thiomicrospira denitrificans (strain ATCC 33889 / DSM 1251)</name>
    <dbReference type="NCBI Taxonomy" id="326298"/>
    <lineage>
        <taxon>Bacteria</taxon>
        <taxon>Pseudomonadati</taxon>
        <taxon>Campylobacterota</taxon>
        <taxon>Epsilonproteobacteria</taxon>
        <taxon>Campylobacterales</taxon>
        <taxon>Sulfurimonadaceae</taxon>
        <taxon>Sulfurimonas</taxon>
    </lineage>
</organism>
<feature type="chain" id="PRO_0000230227" description="Histidinol-phosphate aminotransferase">
    <location>
        <begin position="1"/>
        <end position="364"/>
    </location>
</feature>
<feature type="modified residue" description="N6-(pyridoxal phosphate)lysine" evidence="1">
    <location>
        <position position="226"/>
    </location>
</feature>
<reference key="1">
    <citation type="journal article" date="2008" name="Appl. Environ. Microbiol.">
        <title>Genome of the epsilonproteobacterial chemolithoautotroph Sulfurimonas denitrificans.</title>
        <authorList>
            <person name="Sievert S.M."/>
            <person name="Scott K.M."/>
            <person name="Klotz M.G."/>
            <person name="Chain P.S.G."/>
            <person name="Hauser L.J."/>
            <person name="Hemp J."/>
            <person name="Huegler M."/>
            <person name="Land M."/>
            <person name="Lapidus A."/>
            <person name="Larimer F.W."/>
            <person name="Lucas S."/>
            <person name="Malfatti S.A."/>
            <person name="Meyer F."/>
            <person name="Paulsen I.T."/>
            <person name="Ren Q."/>
            <person name="Simon J."/>
            <person name="Bailey K."/>
            <person name="Diaz E."/>
            <person name="Fitzpatrick K.A."/>
            <person name="Glover B."/>
            <person name="Gwatney N."/>
            <person name="Korajkic A."/>
            <person name="Long A."/>
            <person name="Mobberley J.M."/>
            <person name="Pantry S.N."/>
            <person name="Pazder G."/>
            <person name="Peterson S."/>
            <person name="Quintanilla J.D."/>
            <person name="Sprinkle R."/>
            <person name="Stephens J."/>
            <person name="Thomas P."/>
            <person name="Vaughn R."/>
            <person name="Weber M.J."/>
            <person name="Wooten L.L."/>
        </authorList>
    </citation>
    <scope>NUCLEOTIDE SEQUENCE [LARGE SCALE GENOMIC DNA]</scope>
    <source>
        <strain>ATCC 33889 / DSM 1251</strain>
    </source>
</reference>
<dbReference type="EC" id="2.6.1.9" evidence="1"/>
<dbReference type="EMBL" id="CP000153">
    <property type="protein sequence ID" value="ABB43752.1"/>
    <property type="molecule type" value="Genomic_DNA"/>
</dbReference>
<dbReference type="RefSeq" id="WP_011372106.1">
    <property type="nucleotide sequence ID" value="NC_007575.1"/>
</dbReference>
<dbReference type="SMR" id="Q30TC9"/>
<dbReference type="STRING" id="326298.Suden_0471"/>
<dbReference type="KEGG" id="tdn:Suden_0471"/>
<dbReference type="eggNOG" id="COG0079">
    <property type="taxonomic scope" value="Bacteria"/>
</dbReference>
<dbReference type="HOGENOM" id="CLU_017584_3_3_7"/>
<dbReference type="OrthoDB" id="9813612at2"/>
<dbReference type="UniPathway" id="UPA00031">
    <property type="reaction ID" value="UER00012"/>
</dbReference>
<dbReference type="Proteomes" id="UP000002714">
    <property type="component" value="Chromosome"/>
</dbReference>
<dbReference type="GO" id="GO:0004400">
    <property type="term" value="F:histidinol-phosphate transaminase activity"/>
    <property type="evidence" value="ECO:0007669"/>
    <property type="project" value="UniProtKB-UniRule"/>
</dbReference>
<dbReference type="GO" id="GO:0030170">
    <property type="term" value="F:pyridoxal phosphate binding"/>
    <property type="evidence" value="ECO:0007669"/>
    <property type="project" value="InterPro"/>
</dbReference>
<dbReference type="GO" id="GO:0000105">
    <property type="term" value="P:L-histidine biosynthetic process"/>
    <property type="evidence" value="ECO:0007669"/>
    <property type="project" value="UniProtKB-UniRule"/>
</dbReference>
<dbReference type="CDD" id="cd00609">
    <property type="entry name" value="AAT_like"/>
    <property type="match status" value="1"/>
</dbReference>
<dbReference type="Gene3D" id="3.90.1150.10">
    <property type="entry name" value="Aspartate Aminotransferase, domain 1"/>
    <property type="match status" value="1"/>
</dbReference>
<dbReference type="Gene3D" id="3.40.640.10">
    <property type="entry name" value="Type I PLP-dependent aspartate aminotransferase-like (Major domain)"/>
    <property type="match status" value="1"/>
</dbReference>
<dbReference type="HAMAP" id="MF_01023">
    <property type="entry name" value="HisC_aminotrans_2"/>
    <property type="match status" value="1"/>
</dbReference>
<dbReference type="InterPro" id="IPR001917">
    <property type="entry name" value="Aminotrans_II_pyridoxalP_BS"/>
</dbReference>
<dbReference type="InterPro" id="IPR004839">
    <property type="entry name" value="Aminotransferase_I/II_large"/>
</dbReference>
<dbReference type="InterPro" id="IPR005861">
    <property type="entry name" value="HisP_aminotrans"/>
</dbReference>
<dbReference type="InterPro" id="IPR050106">
    <property type="entry name" value="HistidinolP_aminotransfase"/>
</dbReference>
<dbReference type="InterPro" id="IPR015424">
    <property type="entry name" value="PyrdxlP-dep_Trfase"/>
</dbReference>
<dbReference type="InterPro" id="IPR015421">
    <property type="entry name" value="PyrdxlP-dep_Trfase_major"/>
</dbReference>
<dbReference type="InterPro" id="IPR015422">
    <property type="entry name" value="PyrdxlP-dep_Trfase_small"/>
</dbReference>
<dbReference type="NCBIfam" id="TIGR01141">
    <property type="entry name" value="hisC"/>
    <property type="match status" value="1"/>
</dbReference>
<dbReference type="PANTHER" id="PTHR43643:SF3">
    <property type="entry name" value="HISTIDINOL-PHOSPHATE AMINOTRANSFERASE"/>
    <property type="match status" value="1"/>
</dbReference>
<dbReference type="PANTHER" id="PTHR43643">
    <property type="entry name" value="HISTIDINOL-PHOSPHATE AMINOTRANSFERASE 2"/>
    <property type="match status" value="1"/>
</dbReference>
<dbReference type="Pfam" id="PF00155">
    <property type="entry name" value="Aminotran_1_2"/>
    <property type="match status" value="1"/>
</dbReference>
<dbReference type="SUPFAM" id="SSF53383">
    <property type="entry name" value="PLP-dependent transferases"/>
    <property type="match status" value="1"/>
</dbReference>
<dbReference type="PROSITE" id="PS00599">
    <property type="entry name" value="AA_TRANSFER_CLASS_2"/>
    <property type="match status" value="1"/>
</dbReference>